<gene>
    <name type="primary">RALFL3</name>
    <name type="ordered locus">At1g23147</name>
    <name type="ORF">T26J12</name>
</gene>
<dbReference type="EMBL" id="AC002311">
    <property type="status" value="NOT_ANNOTATED_CDS"/>
    <property type="molecule type" value="Genomic_DNA"/>
</dbReference>
<dbReference type="EMBL" id="CP002684">
    <property type="protein sequence ID" value="AEE30346.1"/>
    <property type="molecule type" value="Genomic_DNA"/>
</dbReference>
<dbReference type="EMBL" id="DQ912194">
    <property type="protein sequence ID" value="ABI34037.1"/>
    <property type="molecule type" value="Genomic_DNA"/>
</dbReference>
<dbReference type="EMBL" id="DQ912248">
    <property type="protein sequence ID" value="ABK27978.1"/>
    <property type="status" value="ALT_SEQ"/>
    <property type="molecule type" value="Genomic_DNA"/>
</dbReference>
<dbReference type="EMBL" id="EF182784">
    <property type="status" value="NOT_ANNOTATED_CDS"/>
    <property type="molecule type" value="mRNA"/>
</dbReference>
<dbReference type="RefSeq" id="NP_001077586.1">
    <property type="nucleotide sequence ID" value="NM_001084117.3"/>
</dbReference>
<dbReference type="SMR" id="A7REE5"/>
<dbReference type="STRING" id="3702.A7REE5"/>
<dbReference type="PaxDb" id="3702-AT1G23147.1"/>
<dbReference type="EnsemblPlants" id="AT1G23147.1">
    <property type="protein sequence ID" value="AT1G23147.1"/>
    <property type="gene ID" value="AT1G23147"/>
</dbReference>
<dbReference type="GeneID" id="5007718"/>
<dbReference type="Gramene" id="AT1G23147.1">
    <property type="protein sequence ID" value="AT1G23147.1"/>
    <property type="gene ID" value="AT1G23147"/>
</dbReference>
<dbReference type="KEGG" id="ath:AT1G23147"/>
<dbReference type="Araport" id="AT1G23147"/>
<dbReference type="TAIR" id="AT1G23147">
    <property type="gene designation" value="RALFL3"/>
</dbReference>
<dbReference type="HOGENOM" id="CLU_189400_0_0_1"/>
<dbReference type="InParanoid" id="A7REE5"/>
<dbReference type="OMA" id="TRCQRDV"/>
<dbReference type="PhylomeDB" id="A7REE5"/>
<dbReference type="PRO" id="PR:A7REE5"/>
<dbReference type="Proteomes" id="UP000006548">
    <property type="component" value="Chromosome 1"/>
</dbReference>
<dbReference type="ExpressionAtlas" id="A7REE5">
    <property type="expression patterns" value="baseline"/>
</dbReference>
<dbReference type="GO" id="GO:0048046">
    <property type="term" value="C:apoplast"/>
    <property type="evidence" value="ECO:0000250"/>
    <property type="project" value="TAIR"/>
</dbReference>
<dbReference type="GO" id="GO:0005179">
    <property type="term" value="F:hormone activity"/>
    <property type="evidence" value="ECO:0000250"/>
    <property type="project" value="UniProtKB"/>
</dbReference>
<dbReference type="GO" id="GO:0019722">
    <property type="term" value="P:calcium-mediated signaling"/>
    <property type="evidence" value="ECO:0000250"/>
    <property type="project" value="UniProtKB"/>
</dbReference>
<dbReference type="GO" id="GO:0007267">
    <property type="term" value="P:cell-cell signaling"/>
    <property type="evidence" value="ECO:0000250"/>
    <property type="project" value="TAIR"/>
</dbReference>
<dbReference type="GO" id="GO:0040008">
    <property type="term" value="P:regulation of growth"/>
    <property type="evidence" value="ECO:0007669"/>
    <property type="project" value="UniProtKB-ARBA"/>
</dbReference>
<dbReference type="InterPro" id="IPR008801">
    <property type="entry name" value="RALF"/>
</dbReference>
<dbReference type="PANTHER" id="PTHR34270">
    <property type="entry name" value="PROTEIN RALF-LIKE 15-RELATED"/>
    <property type="match status" value="1"/>
</dbReference>
<dbReference type="PANTHER" id="PTHR34270:SF3">
    <property type="entry name" value="PROTEIN RALF-LIKE 16-RELATED"/>
    <property type="match status" value="1"/>
</dbReference>
<dbReference type="Pfam" id="PF05498">
    <property type="entry name" value="RALF"/>
    <property type="match status" value="1"/>
</dbReference>
<evidence type="ECO:0000250" key="1"/>
<evidence type="ECO:0000255" key="2"/>
<evidence type="ECO:0000305" key="3"/>
<comment type="function">
    <text evidence="1">Cell signaling peptide that may regulate plant stress, growth, and development. Mediates a rapid alkalinization of extracellular space by mediating a transient increase in the cytoplasmic Ca(2+) concentration leading to a calcium-dependent signaling events through a cell surface receptor and a concomitant activation of some intracellular mitogen-activated protein kinases (By similarity).</text>
</comment>
<comment type="subcellular location">
    <subcellularLocation>
        <location evidence="1">Secreted</location>
    </subcellularLocation>
</comment>
<comment type="similarity">
    <text evidence="3">Belongs to the plant rapid alkalinization factor (RALF) family.</text>
</comment>
<comment type="sequence caution" evidence="3">
    <conflict type="erroneous termination">
        <sequence resource="EMBL-CDS" id="ABK27978"/>
    </conflict>
    <text>Extended C-terminus.</text>
</comment>
<accession>A7REE5</accession>
<accession>A0MJU9</accession>
<organism>
    <name type="scientific">Arabidopsis thaliana</name>
    <name type="common">Mouse-ear cress</name>
    <dbReference type="NCBI Taxonomy" id="3702"/>
    <lineage>
        <taxon>Eukaryota</taxon>
        <taxon>Viridiplantae</taxon>
        <taxon>Streptophyta</taxon>
        <taxon>Embryophyta</taxon>
        <taxon>Tracheophyta</taxon>
        <taxon>Spermatophyta</taxon>
        <taxon>Magnoliopsida</taxon>
        <taxon>eudicotyledons</taxon>
        <taxon>Gunneridae</taxon>
        <taxon>Pentapetalae</taxon>
        <taxon>rosids</taxon>
        <taxon>malvids</taxon>
        <taxon>Brassicales</taxon>
        <taxon>Brassicaceae</taxon>
        <taxon>Camelineae</taxon>
        <taxon>Arabidopsis</taxon>
    </lineage>
</organism>
<proteinExistence type="inferred from homology"/>
<protein>
    <recommendedName>
        <fullName>Protein RALF-like 3</fullName>
    </recommendedName>
</protein>
<feature type="signal peptide" evidence="2">
    <location>
        <begin position="1"/>
        <end position="29"/>
    </location>
</feature>
<feature type="chain" id="PRO_0000420293" description="Protein RALF-like 3">
    <location>
        <begin position="30"/>
        <end position="90"/>
    </location>
</feature>
<feature type="disulfide bond" evidence="1">
    <location>
        <begin position="59"/>
        <end position="67"/>
    </location>
</feature>
<feature type="disulfide bond" evidence="1">
    <location>
        <begin position="80"/>
        <end position="86"/>
    </location>
</feature>
<sequence length="90" mass="10240">MSNLRGTNRFILVAVLVSFVFLSIMNAEARKEIGYPKQRFGEDRTNPYEEITPPLIGGCDPKNPQTCLPKQPANPYRRGCLKITRCQRDV</sequence>
<reference key="1">
    <citation type="journal article" date="2000" name="Nature">
        <title>Sequence and analysis of chromosome 1 of the plant Arabidopsis thaliana.</title>
        <authorList>
            <person name="Theologis A."/>
            <person name="Ecker J.R."/>
            <person name="Palm C.J."/>
            <person name="Federspiel N.A."/>
            <person name="Kaul S."/>
            <person name="White O."/>
            <person name="Alonso J."/>
            <person name="Altafi H."/>
            <person name="Araujo R."/>
            <person name="Bowman C.L."/>
            <person name="Brooks S.Y."/>
            <person name="Buehler E."/>
            <person name="Chan A."/>
            <person name="Chao Q."/>
            <person name="Chen H."/>
            <person name="Cheuk R.F."/>
            <person name="Chin C.W."/>
            <person name="Chung M.K."/>
            <person name="Conn L."/>
            <person name="Conway A.B."/>
            <person name="Conway A.R."/>
            <person name="Creasy T.H."/>
            <person name="Dewar K."/>
            <person name="Dunn P."/>
            <person name="Etgu P."/>
            <person name="Feldblyum T.V."/>
            <person name="Feng J.-D."/>
            <person name="Fong B."/>
            <person name="Fujii C.Y."/>
            <person name="Gill J.E."/>
            <person name="Goldsmith A.D."/>
            <person name="Haas B."/>
            <person name="Hansen N.F."/>
            <person name="Hughes B."/>
            <person name="Huizar L."/>
            <person name="Hunter J.L."/>
            <person name="Jenkins J."/>
            <person name="Johnson-Hopson C."/>
            <person name="Khan S."/>
            <person name="Khaykin E."/>
            <person name="Kim C.J."/>
            <person name="Koo H.L."/>
            <person name="Kremenetskaia I."/>
            <person name="Kurtz D.B."/>
            <person name="Kwan A."/>
            <person name="Lam B."/>
            <person name="Langin-Hooper S."/>
            <person name="Lee A."/>
            <person name="Lee J.M."/>
            <person name="Lenz C.A."/>
            <person name="Li J.H."/>
            <person name="Li Y.-P."/>
            <person name="Lin X."/>
            <person name="Liu S.X."/>
            <person name="Liu Z.A."/>
            <person name="Luros J.S."/>
            <person name="Maiti R."/>
            <person name="Marziali A."/>
            <person name="Militscher J."/>
            <person name="Miranda M."/>
            <person name="Nguyen M."/>
            <person name="Nierman W.C."/>
            <person name="Osborne B.I."/>
            <person name="Pai G."/>
            <person name="Peterson J."/>
            <person name="Pham P.K."/>
            <person name="Rizzo M."/>
            <person name="Rooney T."/>
            <person name="Rowley D."/>
            <person name="Sakano H."/>
            <person name="Salzberg S.L."/>
            <person name="Schwartz J.R."/>
            <person name="Shinn P."/>
            <person name="Southwick A.M."/>
            <person name="Sun H."/>
            <person name="Tallon L.J."/>
            <person name="Tambunga G."/>
            <person name="Toriumi M.J."/>
            <person name="Town C.D."/>
            <person name="Utterback T."/>
            <person name="Van Aken S."/>
            <person name="Vaysberg M."/>
            <person name="Vysotskaia V.S."/>
            <person name="Walker M."/>
            <person name="Wu D."/>
            <person name="Yu G."/>
            <person name="Fraser C.M."/>
            <person name="Venter J.C."/>
            <person name="Davis R.W."/>
        </authorList>
    </citation>
    <scope>NUCLEOTIDE SEQUENCE [LARGE SCALE GENOMIC DNA]</scope>
    <source>
        <strain>cv. Columbia</strain>
    </source>
</reference>
<reference key="2">
    <citation type="journal article" date="2017" name="Plant J.">
        <title>Araport11: a complete reannotation of the Arabidopsis thaliana reference genome.</title>
        <authorList>
            <person name="Cheng C.Y."/>
            <person name="Krishnakumar V."/>
            <person name="Chan A.P."/>
            <person name="Thibaud-Nissen F."/>
            <person name="Schobel S."/>
            <person name="Town C.D."/>
        </authorList>
    </citation>
    <scope>GENOME REANNOTATION</scope>
    <source>
        <strain>cv. Columbia</strain>
    </source>
</reference>
<reference key="3">
    <citation type="journal article" date="2006" name="Plant Biotechnol. J.">
        <title>Simultaneous high-throughput recombinational cloning of open reading frames in closed and open configurations.</title>
        <authorList>
            <person name="Underwood B.A."/>
            <person name="Vanderhaeghen R."/>
            <person name="Whitford R."/>
            <person name="Town C.D."/>
            <person name="Hilson P."/>
        </authorList>
    </citation>
    <scope>NUCLEOTIDE SEQUENCE [LARGE SCALE GENOMIC DNA / MRNA]</scope>
    <source>
        <strain>cv. Columbia</strain>
    </source>
</reference>
<reference key="4">
    <citation type="journal article" date="2002" name="In Silico Biol.">
        <title>Peptomics, identification of novel cationic Arabidopsis peptides with conserved sequence motifs.</title>
        <authorList>
            <person name="Olsen A.N."/>
            <person name="Mundy J."/>
            <person name="Skriver K."/>
        </authorList>
    </citation>
    <scope>GENE FAMILY</scope>
    <scope>NOMENCLATURE</scope>
</reference>
<keyword id="KW-1015">Disulfide bond</keyword>
<keyword id="KW-0372">Hormone</keyword>
<keyword id="KW-1185">Reference proteome</keyword>
<keyword id="KW-0964">Secreted</keyword>
<keyword id="KW-0732">Signal</keyword>
<name>RLF3_ARATH</name>